<sequence length="380" mass="42674">MAPNLRKHHPLLKMVNNSLIDLPTPSNISAWWNFGSLLGICLMTQILTGLLLAMHYTADTSLAFTSVAHTCRNVQFGWLIRNLHANGASLFFICIYLHIGRGFYYGSYLYKETWNTGVILLLTLMATAFVGYVLPWGQMSFWGATVITNLFSAIPYIGQTLVEWAWGGFSVDNPTLTRFFALHFLLPFIIAGLTLIHLTFLHETGSNNPLGISSNCDKIPFHPYFSTKDILGFIILLLPLMTLAMFAPNFLGDPENFTPANPLVTPPHIKPEWYFLFAYAILRSIPNKLGGVLALAASVLVLFLAPFLHMSKQRTMTFRPLSQLLFWTLVANLFILTWIGSQPVEHPFIITGQLASLTYFTILLILFPITGMLENKLLKL</sequence>
<proteinExistence type="inferred from homology"/>
<gene>
    <name type="primary">MT-CYB</name>
    <name type="synonym">COB</name>
    <name type="synonym">CYTB</name>
    <name type="synonym">MTCYB</name>
</gene>
<reference key="1">
    <citation type="journal article" date="2002" name="Mol. Phylogenet. Evol.">
        <title>Phylogeny and character evolution in the Empidonax group of tyrant flycatchers (Aves: Tyrannidae): a test of W.E. Lanyon's hypothesis using mtDNA sequences.</title>
        <authorList>
            <person name="Cicero C."/>
            <person name="Johnson N.K."/>
        </authorList>
    </citation>
    <scope>NUCLEOTIDE SEQUENCE [GENOMIC DNA]</scope>
    <source>
        <strain>Isolate LSUMZ 108499</strain>
        <strain>Isolate LSUMZ 108927</strain>
    </source>
</reference>
<dbReference type="EMBL" id="AF447620">
    <property type="protein sequence ID" value="AAL65939.1"/>
    <property type="molecule type" value="Genomic_DNA"/>
</dbReference>
<dbReference type="EMBL" id="AF447621">
    <property type="protein sequence ID" value="AAL65940.1"/>
    <property type="molecule type" value="Genomic_DNA"/>
</dbReference>
<dbReference type="SMR" id="Q8W8W1"/>
<dbReference type="GO" id="GO:0005743">
    <property type="term" value="C:mitochondrial inner membrane"/>
    <property type="evidence" value="ECO:0007669"/>
    <property type="project" value="UniProtKB-SubCell"/>
</dbReference>
<dbReference type="GO" id="GO:0045275">
    <property type="term" value="C:respiratory chain complex III"/>
    <property type="evidence" value="ECO:0007669"/>
    <property type="project" value="InterPro"/>
</dbReference>
<dbReference type="GO" id="GO:0046872">
    <property type="term" value="F:metal ion binding"/>
    <property type="evidence" value="ECO:0007669"/>
    <property type="project" value="UniProtKB-KW"/>
</dbReference>
<dbReference type="GO" id="GO:0008121">
    <property type="term" value="F:ubiquinol-cytochrome-c reductase activity"/>
    <property type="evidence" value="ECO:0007669"/>
    <property type="project" value="InterPro"/>
</dbReference>
<dbReference type="GO" id="GO:0006122">
    <property type="term" value="P:mitochondrial electron transport, ubiquinol to cytochrome c"/>
    <property type="evidence" value="ECO:0007669"/>
    <property type="project" value="TreeGrafter"/>
</dbReference>
<dbReference type="CDD" id="cd00290">
    <property type="entry name" value="cytochrome_b_C"/>
    <property type="match status" value="1"/>
</dbReference>
<dbReference type="CDD" id="cd00284">
    <property type="entry name" value="Cytochrome_b_N"/>
    <property type="match status" value="1"/>
</dbReference>
<dbReference type="FunFam" id="1.20.810.10:FF:000002">
    <property type="entry name" value="Cytochrome b"/>
    <property type="match status" value="1"/>
</dbReference>
<dbReference type="Gene3D" id="1.20.810.10">
    <property type="entry name" value="Cytochrome Bc1 Complex, Chain C"/>
    <property type="match status" value="1"/>
</dbReference>
<dbReference type="InterPro" id="IPR005798">
    <property type="entry name" value="Cyt_b/b6_C"/>
</dbReference>
<dbReference type="InterPro" id="IPR036150">
    <property type="entry name" value="Cyt_b/b6_C_sf"/>
</dbReference>
<dbReference type="InterPro" id="IPR005797">
    <property type="entry name" value="Cyt_b/b6_N"/>
</dbReference>
<dbReference type="InterPro" id="IPR027387">
    <property type="entry name" value="Cytb/b6-like_sf"/>
</dbReference>
<dbReference type="InterPro" id="IPR030689">
    <property type="entry name" value="Cytochrome_b"/>
</dbReference>
<dbReference type="InterPro" id="IPR048260">
    <property type="entry name" value="Cytochrome_b_C_euk/bac"/>
</dbReference>
<dbReference type="InterPro" id="IPR048259">
    <property type="entry name" value="Cytochrome_b_N_euk/bac"/>
</dbReference>
<dbReference type="InterPro" id="IPR016174">
    <property type="entry name" value="Di-haem_cyt_TM"/>
</dbReference>
<dbReference type="PANTHER" id="PTHR19271">
    <property type="entry name" value="CYTOCHROME B"/>
    <property type="match status" value="1"/>
</dbReference>
<dbReference type="PANTHER" id="PTHR19271:SF16">
    <property type="entry name" value="CYTOCHROME B"/>
    <property type="match status" value="1"/>
</dbReference>
<dbReference type="Pfam" id="PF00032">
    <property type="entry name" value="Cytochrom_B_C"/>
    <property type="match status" value="1"/>
</dbReference>
<dbReference type="Pfam" id="PF00033">
    <property type="entry name" value="Cytochrome_B"/>
    <property type="match status" value="1"/>
</dbReference>
<dbReference type="PIRSF" id="PIRSF038885">
    <property type="entry name" value="COB"/>
    <property type="match status" value="1"/>
</dbReference>
<dbReference type="SUPFAM" id="SSF81648">
    <property type="entry name" value="a domain/subunit of cytochrome bc1 complex (Ubiquinol-cytochrome c reductase)"/>
    <property type="match status" value="1"/>
</dbReference>
<dbReference type="SUPFAM" id="SSF81342">
    <property type="entry name" value="Transmembrane di-heme cytochromes"/>
    <property type="match status" value="1"/>
</dbReference>
<dbReference type="PROSITE" id="PS51003">
    <property type="entry name" value="CYTB_CTER"/>
    <property type="match status" value="1"/>
</dbReference>
<dbReference type="PROSITE" id="PS51002">
    <property type="entry name" value="CYTB_NTER"/>
    <property type="match status" value="1"/>
</dbReference>
<organism>
    <name type="scientific">Aphanotriccus audax</name>
    <name type="common">Black-billed flycatcher</name>
    <dbReference type="NCBI Taxonomy" id="183535"/>
    <lineage>
        <taxon>Eukaryota</taxon>
        <taxon>Metazoa</taxon>
        <taxon>Chordata</taxon>
        <taxon>Craniata</taxon>
        <taxon>Vertebrata</taxon>
        <taxon>Euteleostomi</taxon>
        <taxon>Archelosauria</taxon>
        <taxon>Archosauria</taxon>
        <taxon>Dinosauria</taxon>
        <taxon>Saurischia</taxon>
        <taxon>Theropoda</taxon>
        <taxon>Coelurosauria</taxon>
        <taxon>Aves</taxon>
        <taxon>Neognathae</taxon>
        <taxon>Neoaves</taxon>
        <taxon>Telluraves</taxon>
        <taxon>Australaves</taxon>
        <taxon>Passeriformes</taxon>
        <taxon>Tyrannidae</taxon>
        <taxon>Aphanotriccus</taxon>
    </lineage>
</organism>
<accession>Q8W8W1</accession>
<geneLocation type="mitochondrion"/>
<comment type="function">
    <text evidence="2">Component of the ubiquinol-cytochrome c reductase complex (complex III or cytochrome b-c1 complex) that is part of the mitochondrial respiratory chain. The b-c1 complex mediates electron transfer from ubiquinol to cytochrome c. Contributes to the generation of a proton gradient across the mitochondrial membrane that is then used for ATP synthesis.</text>
</comment>
<comment type="cofactor">
    <cofactor evidence="2">
        <name>heme b</name>
        <dbReference type="ChEBI" id="CHEBI:60344"/>
    </cofactor>
    <text evidence="2">Binds 2 heme b groups non-covalently.</text>
</comment>
<comment type="subunit">
    <text evidence="2">The cytochrome bc1 complex contains 11 subunits: 3 respiratory subunits (MT-CYB, CYC1 and UQCRFS1), 2 core proteins (UQCRC1 and UQCRC2) and 6 low-molecular weight proteins (UQCRH/QCR6, UQCRB/QCR7, UQCRQ/QCR8, UQCR10/QCR9, UQCR11/QCR10 and a cleavage product of UQCRFS1). This cytochrome bc1 complex then forms a dimer.</text>
</comment>
<comment type="subcellular location">
    <subcellularLocation>
        <location evidence="2">Mitochondrion inner membrane</location>
        <topology evidence="2">Multi-pass membrane protein</topology>
    </subcellularLocation>
</comment>
<comment type="miscellaneous">
    <text evidence="1">Heme 1 (or BL or b562) is low-potential and absorbs at about 562 nm, and heme 2 (or BH or b566) is high-potential and absorbs at about 566 nm.</text>
</comment>
<comment type="similarity">
    <text evidence="3 4">Belongs to the cytochrome b family.</text>
</comment>
<comment type="caution">
    <text evidence="2">The full-length protein contains only eight transmembrane helices, not nine as predicted by bioinformatics tools.</text>
</comment>
<name>CYB_APHAU</name>
<keyword id="KW-0249">Electron transport</keyword>
<keyword id="KW-0349">Heme</keyword>
<keyword id="KW-0408">Iron</keyword>
<keyword id="KW-0472">Membrane</keyword>
<keyword id="KW-0479">Metal-binding</keyword>
<keyword id="KW-0496">Mitochondrion</keyword>
<keyword id="KW-0999">Mitochondrion inner membrane</keyword>
<keyword id="KW-0679">Respiratory chain</keyword>
<keyword id="KW-0812">Transmembrane</keyword>
<keyword id="KW-1133">Transmembrane helix</keyword>
<keyword id="KW-0813">Transport</keyword>
<keyword id="KW-0830">Ubiquinone</keyword>
<feature type="chain" id="PRO_0000060604" description="Cytochrome b">
    <location>
        <begin position="1"/>
        <end position="380"/>
    </location>
</feature>
<feature type="transmembrane region" description="Helical" evidence="2">
    <location>
        <begin position="34"/>
        <end position="54"/>
    </location>
</feature>
<feature type="transmembrane region" description="Helical" evidence="2">
    <location>
        <begin position="78"/>
        <end position="99"/>
    </location>
</feature>
<feature type="transmembrane region" description="Helical" evidence="2">
    <location>
        <begin position="114"/>
        <end position="134"/>
    </location>
</feature>
<feature type="transmembrane region" description="Helical" evidence="2">
    <location>
        <begin position="179"/>
        <end position="199"/>
    </location>
</feature>
<feature type="transmembrane region" description="Helical" evidence="2">
    <location>
        <begin position="227"/>
        <end position="247"/>
    </location>
</feature>
<feature type="transmembrane region" description="Helical" evidence="2">
    <location>
        <begin position="289"/>
        <end position="309"/>
    </location>
</feature>
<feature type="transmembrane region" description="Helical" evidence="2">
    <location>
        <begin position="321"/>
        <end position="341"/>
    </location>
</feature>
<feature type="transmembrane region" description="Helical" evidence="2">
    <location>
        <begin position="348"/>
        <end position="368"/>
    </location>
</feature>
<feature type="binding site" description="axial binding residue" evidence="2">
    <location>
        <position position="84"/>
    </location>
    <ligand>
        <name>heme b</name>
        <dbReference type="ChEBI" id="CHEBI:60344"/>
        <label>b562</label>
    </ligand>
    <ligandPart>
        <name>Fe</name>
        <dbReference type="ChEBI" id="CHEBI:18248"/>
    </ligandPart>
</feature>
<feature type="binding site" description="axial binding residue" evidence="2">
    <location>
        <position position="98"/>
    </location>
    <ligand>
        <name>heme b</name>
        <dbReference type="ChEBI" id="CHEBI:60344"/>
        <label>b566</label>
    </ligand>
    <ligandPart>
        <name>Fe</name>
        <dbReference type="ChEBI" id="CHEBI:18248"/>
    </ligandPart>
</feature>
<feature type="binding site" description="axial binding residue" evidence="2">
    <location>
        <position position="183"/>
    </location>
    <ligand>
        <name>heme b</name>
        <dbReference type="ChEBI" id="CHEBI:60344"/>
        <label>b562</label>
    </ligand>
    <ligandPart>
        <name>Fe</name>
        <dbReference type="ChEBI" id="CHEBI:18248"/>
    </ligandPart>
</feature>
<feature type="binding site" description="axial binding residue" evidence="2">
    <location>
        <position position="197"/>
    </location>
    <ligand>
        <name>heme b</name>
        <dbReference type="ChEBI" id="CHEBI:60344"/>
        <label>b566</label>
    </ligand>
    <ligandPart>
        <name>Fe</name>
        <dbReference type="ChEBI" id="CHEBI:18248"/>
    </ligandPart>
</feature>
<feature type="binding site" evidence="2">
    <location>
        <position position="202"/>
    </location>
    <ligand>
        <name>a ubiquinone</name>
        <dbReference type="ChEBI" id="CHEBI:16389"/>
    </ligand>
</feature>
<protein>
    <recommendedName>
        <fullName>Cytochrome b</fullName>
    </recommendedName>
    <alternativeName>
        <fullName>Complex III subunit 3</fullName>
    </alternativeName>
    <alternativeName>
        <fullName>Complex III subunit III</fullName>
    </alternativeName>
    <alternativeName>
        <fullName>Cytochrome b-c1 complex subunit 3</fullName>
    </alternativeName>
    <alternativeName>
        <fullName>Ubiquinol-cytochrome-c reductase complex cytochrome b subunit</fullName>
    </alternativeName>
</protein>
<evidence type="ECO:0000250" key="1"/>
<evidence type="ECO:0000250" key="2">
    <source>
        <dbReference type="UniProtKB" id="P00157"/>
    </source>
</evidence>
<evidence type="ECO:0000255" key="3">
    <source>
        <dbReference type="PROSITE-ProRule" id="PRU00967"/>
    </source>
</evidence>
<evidence type="ECO:0000255" key="4">
    <source>
        <dbReference type="PROSITE-ProRule" id="PRU00968"/>
    </source>
</evidence>